<feature type="chain" id="PRO_0000101174" description="Signal recognition particle 54 kDa protein">
    <location>
        <begin position="1"/>
        <end position="460"/>
    </location>
</feature>
<feature type="binding site" evidence="1">
    <location>
        <begin position="104"/>
        <end position="111"/>
    </location>
    <ligand>
        <name>GTP</name>
        <dbReference type="ChEBI" id="CHEBI:37565"/>
    </ligand>
</feature>
<feature type="binding site" evidence="1">
    <location>
        <begin position="184"/>
        <end position="188"/>
    </location>
    <ligand>
        <name>GTP</name>
        <dbReference type="ChEBI" id="CHEBI:37565"/>
    </ligand>
</feature>
<feature type="binding site" evidence="1">
    <location>
        <begin position="242"/>
        <end position="245"/>
    </location>
    <ligand>
        <name>GTP</name>
        <dbReference type="ChEBI" id="CHEBI:37565"/>
    </ligand>
</feature>
<comment type="function">
    <text evidence="1">Involved in targeting and insertion of nascent membrane proteins into the cytoplasmic membrane. Binds to the hydrophobic signal sequence of the ribosome-nascent chain (RNC) as it emerges from the ribosomes. The SRP-RNC complex is then targeted to the cytoplasmic membrane where it interacts with the SRP receptor FtsY.</text>
</comment>
<comment type="catalytic activity">
    <reaction evidence="1">
        <text>GTP + H2O = GDP + phosphate + H(+)</text>
        <dbReference type="Rhea" id="RHEA:19669"/>
        <dbReference type="ChEBI" id="CHEBI:15377"/>
        <dbReference type="ChEBI" id="CHEBI:15378"/>
        <dbReference type="ChEBI" id="CHEBI:37565"/>
        <dbReference type="ChEBI" id="CHEBI:43474"/>
        <dbReference type="ChEBI" id="CHEBI:58189"/>
        <dbReference type="EC" id="3.6.5.4"/>
    </reaction>
</comment>
<comment type="subunit">
    <text evidence="1">Part of the signal recognition particle protein translocation system, which is composed of SRP and FtsY. Archaeal SRP consists of a 7S RNA molecule of 300 nucleotides and two protein subunits: SRP54 and SRP19.</text>
</comment>
<comment type="subcellular location">
    <subcellularLocation>
        <location evidence="1">Cytoplasm</location>
    </subcellularLocation>
    <text evidence="1">The SRP-RNC complex is targeted to the cytoplasmic membrane.</text>
</comment>
<comment type="domain">
    <text evidence="1">Composed of three domains: the N-terminal N domain, which is responsible for interactions with the ribosome, the central G domain, which binds GTP, and the C-terminal M domain, which binds the RNA and the signal sequence of the RNC.</text>
</comment>
<comment type="similarity">
    <text evidence="1">Belongs to the GTP-binding SRP family. SRP54 subfamily.</text>
</comment>
<sequence>MVLDDLGSSLRGTLDTLRGKSRISEEDVDKVVKEIQRSLLQADVDVDLVMDLSESITERSLEEEPPGGTSARDHVLRIVYEELVGLVGDSTPIPLEEQTIMLAGLQGSGKTTTAAKMAWWFSKKGLRPAIVQTDTFRPGAYEQAAEMADRAEVDFYGEPDSDDPVQIARDGLAATADADVHIVDTAGRHALEDDLIAEIEEIEGVVEPDRSLLVLDAAIGQGAKQQARQFDASIGIDGVAITKLDGTAKGGGSLTAVNETDSTIAFLGSGETVQDIERFEPDSFISRLLGMGDLKQLTERVERAMEETQDDDEDWDPEDLMKGEFTLHDMRKQMQAMDNMGPLDQVMDMIPGMGGGLMDELPDDAMDVTQERMRGFEVIMDSMTEAEMADPRSVGASQIRRIARGSGQPEDRVRELLDQHKMMAQTMQQFQGMGDGDMQRMMSKMQQQGGGGGGGFGGMF</sequence>
<dbReference type="EC" id="3.6.5.4" evidence="1"/>
<dbReference type="EMBL" id="AE004437">
    <property type="protein sequence ID" value="AAG20536.1"/>
    <property type="molecule type" value="Genomic_DNA"/>
</dbReference>
<dbReference type="PIR" id="D84396">
    <property type="entry name" value="D84396"/>
</dbReference>
<dbReference type="RefSeq" id="WP_010903838.1">
    <property type="nucleotide sequence ID" value="NC_002607.1"/>
</dbReference>
<dbReference type="SMR" id="Q9HMN5"/>
<dbReference type="FunCoup" id="Q9HMN5">
    <property type="interactions" value="151"/>
</dbReference>
<dbReference type="STRING" id="64091.VNG_2459G"/>
<dbReference type="PaxDb" id="64091-VNG_2459G"/>
<dbReference type="KEGG" id="hal:VNG_2459G"/>
<dbReference type="PATRIC" id="fig|64091.14.peg.1904"/>
<dbReference type="HOGENOM" id="CLU_009301_6_0_2"/>
<dbReference type="InParanoid" id="Q9HMN5"/>
<dbReference type="OrthoDB" id="52849at2157"/>
<dbReference type="PhylomeDB" id="Q9HMN5"/>
<dbReference type="Proteomes" id="UP000000554">
    <property type="component" value="Chromosome"/>
</dbReference>
<dbReference type="GO" id="GO:0048500">
    <property type="term" value="C:signal recognition particle"/>
    <property type="evidence" value="ECO:0007669"/>
    <property type="project" value="UniProtKB-UniRule"/>
</dbReference>
<dbReference type="GO" id="GO:0008312">
    <property type="term" value="F:7S RNA binding"/>
    <property type="evidence" value="ECO:0007669"/>
    <property type="project" value="UniProtKB-UniRule"/>
</dbReference>
<dbReference type="GO" id="GO:0016887">
    <property type="term" value="F:ATP hydrolysis activity"/>
    <property type="evidence" value="ECO:0007669"/>
    <property type="project" value="InterPro"/>
</dbReference>
<dbReference type="GO" id="GO:0005525">
    <property type="term" value="F:GTP binding"/>
    <property type="evidence" value="ECO:0007669"/>
    <property type="project" value="UniProtKB-UniRule"/>
</dbReference>
<dbReference type="GO" id="GO:0003924">
    <property type="term" value="F:GTPase activity"/>
    <property type="evidence" value="ECO:0007669"/>
    <property type="project" value="UniProtKB-UniRule"/>
</dbReference>
<dbReference type="GO" id="GO:0006614">
    <property type="term" value="P:SRP-dependent cotranslational protein targeting to membrane"/>
    <property type="evidence" value="ECO:0007669"/>
    <property type="project" value="InterPro"/>
</dbReference>
<dbReference type="CDD" id="cd17875">
    <property type="entry name" value="SRP54_G"/>
    <property type="match status" value="1"/>
</dbReference>
<dbReference type="Gene3D" id="3.40.50.300">
    <property type="entry name" value="P-loop containing nucleotide triphosphate hydrolases"/>
    <property type="match status" value="1"/>
</dbReference>
<dbReference type="Gene3D" id="1.20.120.140">
    <property type="entry name" value="Signal recognition particle SRP54, nucleotide-binding domain"/>
    <property type="match status" value="1"/>
</dbReference>
<dbReference type="Gene3D" id="1.10.260.30">
    <property type="entry name" value="Signal recognition particle, SRP54 subunit, M-domain"/>
    <property type="match status" value="1"/>
</dbReference>
<dbReference type="HAMAP" id="MF_00306">
    <property type="entry name" value="SRP54"/>
    <property type="match status" value="1"/>
</dbReference>
<dbReference type="InterPro" id="IPR003593">
    <property type="entry name" value="AAA+_ATPase"/>
</dbReference>
<dbReference type="InterPro" id="IPR027417">
    <property type="entry name" value="P-loop_NTPase"/>
</dbReference>
<dbReference type="InterPro" id="IPR036891">
    <property type="entry name" value="Signal_recog_part_SRP54_M_sf"/>
</dbReference>
<dbReference type="InterPro" id="IPR013822">
    <property type="entry name" value="Signal_recog_particl_SRP54_hlx"/>
</dbReference>
<dbReference type="InterPro" id="IPR004125">
    <property type="entry name" value="Signal_recog_particle_SRP54_M"/>
</dbReference>
<dbReference type="InterPro" id="IPR036225">
    <property type="entry name" value="SRP/SRP_N"/>
</dbReference>
<dbReference type="InterPro" id="IPR022941">
    <property type="entry name" value="SRP54"/>
</dbReference>
<dbReference type="InterPro" id="IPR000897">
    <property type="entry name" value="SRP54_GTPase_dom"/>
</dbReference>
<dbReference type="InterPro" id="IPR042101">
    <property type="entry name" value="SRP54_N_sf"/>
</dbReference>
<dbReference type="PANTHER" id="PTHR11564">
    <property type="entry name" value="SIGNAL RECOGNITION PARTICLE 54K PROTEIN SRP54"/>
    <property type="match status" value="1"/>
</dbReference>
<dbReference type="PANTHER" id="PTHR11564:SF5">
    <property type="entry name" value="SIGNAL RECOGNITION PARTICLE SUBUNIT SRP54"/>
    <property type="match status" value="1"/>
</dbReference>
<dbReference type="Pfam" id="PF00448">
    <property type="entry name" value="SRP54"/>
    <property type="match status" value="1"/>
</dbReference>
<dbReference type="Pfam" id="PF02881">
    <property type="entry name" value="SRP54_N"/>
    <property type="match status" value="1"/>
</dbReference>
<dbReference type="Pfam" id="PF02978">
    <property type="entry name" value="SRP_SPB"/>
    <property type="match status" value="1"/>
</dbReference>
<dbReference type="SMART" id="SM00382">
    <property type="entry name" value="AAA"/>
    <property type="match status" value="1"/>
</dbReference>
<dbReference type="SMART" id="SM00962">
    <property type="entry name" value="SRP54"/>
    <property type="match status" value="1"/>
</dbReference>
<dbReference type="SMART" id="SM00963">
    <property type="entry name" value="SRP54_N"/>
    <property type="match status" value="1"/>
</dbReference>
<dbReference type="SUPFAM" id="SSF47364">
    <property type="entry name" value="Domain of the SRP/SRP receptor G-proteins"/>
    <property type="match status" value="1"/>
</dbReference>
<dbReference type="SUPFAM" id="SSF52540">
    <property type="entry name" value="P-loop containing nucleoside triphosphate hydrolases"/>
    <property type="match status" value="1"/>
</dbReference>
<dbReference type="SUPFAM" id="SSF47446">
    <property type="entry name" value="Signal peptide-binding domain"/>
    <property type="match status" value="1"/>
</dbReference>
<name>SRP54_HALSA</name>
<keyword id="KW-0963">Cytoplasm</keyword>
<keyword id="KW-0342">GTP-binding</keyword>
<keyword id="KW-0378">Hydrolase</keyword>
<keyword id="KW-0547">Nucleotide-binding</keyword>
<keyword id="KW-1185">Reference proteome</keyword>
<keyword id="KW-0687">Ribonucleoprotein</keyword>
<keyword id="KW-0694">RNA-binding</keyword>
<keyword id="KW-0733">Signal recognition particle</keyword>
<organism>
    <name type="scientific">Halobacterium salinarum (strain ATCC 700922 / JCM 11081 / NRC-1)</name>
    <name type="common">Halobacterium halobium</name>
    <dbReference type="NCBI Taxonomy" id="64091"/>
    <lineage>
        <taxon>Archaea</taxon>
        <taxon>Methanobacteriati</taxon>
        <taxon>Methanobacteriota</taxon>
        <taxon>Stenosarchaea group</taxon>
        <taxon>Halobacteria</taxon>
        <taxon>Halobacteriales</taxon>
        <taxon>Halobacteriaceae</taxon>
        <taxon>Halobacterium</taxon>
        <taxon>Halobacterium salinarum NRC-34001</taxon>
    </lineage>
</organism>
<gene>
    <name evidence="1" type="primary">srp54</name>
    <name type="ordered locus">VNG_2459G</name>
</gene>
<proteinExistence type="inferred from homology"/>
<protein>
    <recommendedName>
        <fullName evidence="1">Signal recognition particle 54 kDa protein</fullName>
        <shortName evidence="1">SRP54</shortName>
        <ecNumber evidence="1">3.6.5.4</ecNumber>
    </recommendedName>
</protein>
<reference key="1">
    <citation type="journal article" date="2000" name="Proc. Natl. Acad. Sci. U.S.A.">
        <title>Genome sequence of Halobacterium species NRC-1.</title>
        <authorList>
            <person name="Ng W.V."/>
            <person name="Kennedy S.P."/>
            <person name="Mahairas G.G."/>
            <person name="Berquist B."/>
            <person name="Pan M."/>
            <person name="Shukla H.D."/>
            <person name="Lasky S.R."/>
            <person name="Baliga N.S."/>
            <person name="Thorsson V."/>
            <person name="Sbrogna J."/>
            <person name="Swartzell S."/>
            <person name="Weir D."/>
            <person name="Hall J."/>
            <person name="Dahl T.A."/>
            <person name="Welti R."/>
            <person name="Goo Y.A."/>
            <person name="Leithauser B."/>
            <person name="Keller K."/>
            <person name="Cruz R."/>
            <person name="Danson M.J."/>
            <person name="Hough D.W."/>
            <person name="Maddocks D.G."/>
            <person name="Jablonski P.E."/>
            <person name="Krebs M.P."/>
            <person name="Angevine C.M."/>
            <person name="Dale H."/>
            <person name="Isenbarger T.A."/>
            <person name="Peck R.F."/>
            <person name="Pohlschroder M."/>
            <person name="Spudich J.L."/>
            <person name="Jung K.-H."/>
            <person name="Alam M."/>
            <person name="Freitas T."/>
            <person name="Hou S."/>
            <person name="Daniels C.J."/>
            <person name="Dennis P.P."/>
            <person name="Omer A.D."/>
            <person name="Ebhardt H."/>
            <person name="Lowe T.M."/>
            <person name="Liang P."/>
            <person name="Riley M."/>
            <person name="Hood L."/>
            <person name="DasSarma S."/>
        </authorList>
    </citation>
    <scope>NUCLEOTIDE SEQUENCE [LARGE SCALE GENOMIC DNA]</scope>
    <source>
        <strain>ATCC 700922 / JCM 11081 / NRC-1</strain>
    </source>
</reference>
<accession>Q9HMN5</accession>
<evidence type="ECO:0000255" key="1">
    <source>
        <dbReference type="HAMAP-Rule" id="MF_00306"/>
    </source>
</evidence>